<evidence type="ECO:0000255" key="1">
    <source>
        <dbReference type="HAMAP-Rule" id="MF_00185"/>
    </source>
</evidence>
<protein>
    <recommendedName>
        <fullName evidence="1">tRNA dimethylallyltransferase 1</fullName>
        <ecNumber evidence="1">2.5.1.75</ecNumber>
    </recommendedName>
    <alternativeName>
        <fullName evidence="1">Dimethylallyl diphosphate:tRNA dimethylallyltransferase 1</fullName>
        <shortName evidence="1">DMAPP:tRNA dimethylallyltransferase 1</shortName>
        <shortName evidence="1">DMATase 1</shortName>
    </alternativeName>
    <alternativeName>
        <fullName evidence="1">Isopentenyl-diphosphate:tRNA isopentenyltransferase 1</fullName>
        <shortName evidence="1">IPP transferase 1</shortName>
        <shortName evidence="1">IPPT 1</shortName>
        <shortName evidence="1">IPTase 1</shortName>
    </alternativeName>
</protein>
<reference key="1">
    <citation type="submission" date="2008-05" db="EMBL/GenBank/DDBJ databases">
        <title>Complete sequence of chromosome of Geobacter lovleyi SZ.</title>
        <authorList>
            <consortium name="US DOE Joint Genome Institute"/>
            <person name="Lucas S."/>
            <person name="Copeland A."/>
            <person name="Lapidus A."/>
            <person name="Glavina del Rio T."/>
            <person name="Dalin E."/>
            <person name="Tice H."/>
            <person name="Bruce D."/>
            <person name="Goodwin L."/>
            <person name="Pitluck S."/>
            <person name="Chertkov O."/>
            <person name="Meincke L."/>
            <person name="Brettin T."/>
            <person name="Detter J.C."/>
            <person name="Han C."/>
            <person name="Tapia R."/>
            <person name="Kuske C.R."/>
            <person name="Schmutz J."/>
            <person name="Larimer F."/>
            <person name="Land M."/>
            <person name="Hauser L."/>
            <person name="Kyrpides N."/>
            <person name="Mikhailova N."/>
            <person name="Sung Y."/>
            <person name="Fletcher K.E."/>
            <person name="Ritalahti K.M."/>
            <person name="Loeffler F.E."/>
            <person name="Richardson P."/>
        </authorList>
    </citation>
    <scope>NUCLEOTIDE SEQUENCE [LARGE SCALE GENOMIC DNA]</scope>
    <source>
        <strain>ATCC BAA-1151 / DSM 17278 / SZ</strain>
    </source>
</reference>
<accession>B3E5Z1</accession>
<proteinExistence type="inferred from homology"/>
<gene>
    <name evidence="1" type="primary">miaA1</name>
    <name type="ordered locus">Glov_0992</name>
</gene>
<comment type="function">
    <text evidence="1">Catalyzes the transfer of a dimethylallyl group onto the adenine at position 37 in tRNAs that read codons beginning with uridine, leading to the formation of N6-(dimethylallyl)adenosine (i(6)A).</text>
</comment>
<comment type="catalytic activity">
    <reaction evidence="1">
        <text>adenosine(37) in tRNA + dimethylallyl diphosphate = N(6)-dimethylallyladenosine(37) in tRNA + diphosphate</text>
        <dbReference type="Rhea" id="RHEA:26482"/>
        <dbReference type="Rhea" id="RHEA-COMP:10162"/>
        <dbReference type="Rhea" id="RHEA-COMP:10375"/>
        <dbReference type="ChEBI" id="CHEBI:33019"/>
        <dbReference type="ChEBI" id="CHEBI:57623"/>
        <dbReference type="ChEBI" id="CHEBI:74411"/>
        <dbReference type="ChEBI" id="CHEBI:74415"/>
        <dbReference type="EC" id="2.5.1.75"/>
    </reaction>
</comment>
<comment type="cofactor">
    <cofactor evidence="1">
        <name>Mg(2+)</name>
        <dbReference type="ChEBI" id="CHEBI:18420"/>
    </cofactor>
</comment>
<comment type="subunit">
    <text evidence="1">Monomer.</text>
</comment>
<comment type="similarity">
    <text evidence="1">Belongs to the IPP transferase family.</text>
</comment>
<name>MIAA1_TRIL1</name>
<keyword id="KW-0067">ATP-binding</keyword>
<keyword id="KW-0460">Magnesium</keyword>
<keyword id="KW-0547">Nucleotide-binding</keyword>
<keyword id="KW-1185">Reference proteome</keyword>
<keyword id="KW-0808">Transferase</keyword>
<keyword id="KW-0819">tRNA processing</keyword>
<organism>
    <name type="scientific">Trichlorobacter lovleyi (strain ATCC BAA-1151 / DSM 17278 / SZ)</name>
    <name type="common">Geobacter lovleyi</name>
    <dbReference type="NCBI Taxonomy" id="398767"/>
    <lineage>
        <taxon>Bacteria</taxon>
        <taxon>Pseudomonadati</taxon>
        <taxon>Thermodesulfobacteriota</taxon>
        <taxon>Desulfuromonadia</taxon>
        <taxon>Geobacterales</taxon>
        <taxon>Geobacteraceae</taxon>
        <taxon>Trichlorobacter</taxon>
    </lineage>
</organism>
<dbReference type="EC" id="2.5.1.75" evidence="1"/>
<dbReference type="EMBL" id="CP001089">
    <property type="protein sequence ID" value="ACD94715.1"/>
    <property type="molecule type" value="Genomic_DNA"/>
</dbReference>
<dbReference type="RefSeq" id="WP_012469065.1">
    <property type="nucleotide sequence ID" value="NC_010814.1"/>
</dbReference>
<dbReference type="SMR" id="B3E5Z1"/>
<dbReference type="STRING" id="398767.Glov_0992"/>
<dbReference type="KEGG" id="glo:Glov_0992"/>
<dbReference type="eggNOG" id="COG0324">
    <property type="taxonomic scope" value="Bacteria"/>
</dbReference>
<dbReference type="HOGENOM" id="CLU_032616_0_1_7"/>
<dbReference type="OrthoDB" id="9776390at2"/>
<dbReference type="Proteomes" id="UP000002420">
    <property type="component" value="Chromosome"/>
</dbReference>
<dbReference type="GO" id="GO:0005524">
    <property type="term" value="F:ATP binding"/>
    <property type="evidence" value="ECO:0007669"/>
    <property type="project" value="UniProtKB-UniRule"/>
</dbReference>
<dbReference type="GO" id="GO:0052381">
    <property type="term" value="F:tRNA dimethylallyltransferase activity"/>
    <property type="evidence" value="ECO:0007669"/>
    <property type="project" value="UniProtKB-UniRule"/>
</dbReference>
<dbReference type="GO" id="GO:0006400">
    <property type="term" value="P:tRNA modification"/>
    <property type="evidence" value="ECO:0007669"/>
    <property type="project" value="TreeGrafter"/>
</dbReference>
<dbReference type="FunFam" id="1.10.20.140:FF:000001">
    <property type="entry name" value="tRNA dimethylallyltransferase"/>
    <property type="match status" value="1"/>
</dbReference>
<dbReference type="Gene3D" id="1.10.20.140">
    <property type="match status" value="1"/>
</dbReference>
<dbReference type="Gene3D" id="3.40.50.300">
    <property type="entry name" value="P-loop containing nucleotide triphosphate hydrolases"/>
    <property type="match status" value="1"/>
</dbReference>
<dbReference type="HAMAP" id="MF_00185">
    <property type="entry name" value="IPP_trans"/>
    <property type="match status" value="1"/>
</dbReference>
<dbReference type="InterPro" id="IPR039657">
    <property type="entry name" value="Dimethylallyltransferase"/>
</dbReference>
<dbReference type="InterPro" id="IPR018022">
    <property type="entry name" value="IPT"/>
</dbReference>
<dbReference type="InterPro" id="IPR027417">
    <property type="entry name" value="P-loop_NTPase"/>
</dbReference>
<dbReference type="NCBIfam" id="TIGR00174">
    <property type="entry name" value="miaA"/>
    <property type="match status" value="1"/>
</dbReference>
<dbReference type="PANTHER" id="PTHR11088">
    <property type="entry name" value="TRNA DIMETHYLALLYLTRANSFERASE"/>
    <property type="match status" value="1"/>
</dbReference>
<dbReference type="PANTHER" id="PTHR11088:SF60">
    <property type="entry name" value="TRNA DIMETHYLALLYLTRANSFERASE"/>
    <property type="match status" value="1"/>
</dbReference>
<dbReference type="Pfam" id="PF01715">
    <property type="entry name" value="IPPT"/>
    <property type="match status" value="1"/>
</dbReference>
<dbReference type="SUPFAM" id="SSF52540">
    <property type="entry name" value="P-loop containing nucleoside triphosphate hydrolases"/>
    <property type="match status" value="2"/>
</dbReference>
<sequence length="305" mass="33549">MKPRVLVIAGPTASGKSALALDLAVALDGEIICADSLTVYRGLDIGSAKPTAEQQRQIPHHLLDIREPTEPFTAADFKLAAKAAIAAICQRGKRPILAGGTGLYLRALLRGLNDAPGEDPVLRETLRKRLECEGAETLLAELAKVDPDTSQRLHPNNRNRIIRALEVFQTTGIPLSQFQAEHGFADSPYDSLQFCLDLPRPELYQRIDDRVDAMLAAGLVAEVQGLLQSGVPADCKPLQAIGYKEVLAHLQGEYDHNEMVRLIKRNTRHFAKRQLTWFRSEPAMQWVAYPENSATIHSAAATFFA</sequence>
<feature type="chain" id="PRO_0000377169" description="tRNA dimethylallyltransferase 1">
    <location>
        <begin position="1"/>
        <end position="305"/>
    </location>
</feature>
<feature type="region of interest" description="Interaction with substrate tRNA" evidence="1">
    <location>
        <begin position="35"/>
        <end position="38"/>
    </location>
</feature>
<feature type="binding site" evidence="1">
    <location>
        <begin position="10"/>
        <end position="17"/>
    </location>
    <ligand>
        <name>ATP</name>
        <dbReference type="ChEBI" id="CHEBI:30616"/>
    </ligand>
</feature>
<feature type="binding site" evidence="1">
    <location>
        <begin position="12"/>
        <end position="17"/>
    </location>
    <ligand>
        <name>substrate</name>
    </ligand>
</feature>
<feature type="site" description="Interaction with substrate tRNA" evidence="1">
    <location>
        <position position="101"/>
    </location>
</feature>
<feature type="site" description="Interaction with substrate tRNA" evidence="1">
    <location>
        <position position="123"/>
    </location>
</feature>